<gene>
    <name evidence="1" type="primary">argB</name>
    <name type="ordered locus">Ent638_4027</name>
</gene>
<feature type="chain" id="PRO_0000335627" description="Acetylglutamate kinase">
    <location>
        <begin position="1"/>
        <end position="257"/>
    </location>
</feature>
<feature type="binding site" evidence="1">
    <location>
        <begin position="43"/>
        <end position="44"/>
    </location>
    <ligand>
        <name>substrate</name>
    </ligand>
</feature>
<feature type="binding site" evidence="1">
    <location>
        <position position="65"/>
    </location>
    <ligand>
        <name>substrate</name>
    </ligand>
</feature>
<feature type="binding site" evidence="1">
    <location>
        <position position="157"/>
    </location>
    <ligand>
        <name>substrate</name>
    </ligand>
</feature>
<feature type="binding site" evidence="1">
    <location>
        <begin position="180"/>
        <end position="185"/>
    </location>
    <ligand>
        <name>ATP</name>
        <dbReference type="ChEBI" id="CHEBI:30616"/>
    </ligand>
</feature>
<feature type="binding site" evidence="1">
    <location>
        <begin position="208"/>
        <end position="210"/>
    </location>
    <ligand>
        <name>ATP</name>
        <dbReference type="ChEBI" id="CHEBI:30616"/>
    </ligand>
</feature>
<feature type="site" description="Transition state stabilizer" evidence="1">
    <location>
        <position position="7"/>
    </location>
</feature>
<feature type="site" description="Transition state stabilizer" evidence="1">
    <location>
        <position position="216"/>
    </location>
</feature>
<proteinExistence type="inferred from homology"/>
<keyword id="KW-0028">Amino-acid biosynthesis</keyword>
<keyword id="KW-0055">Arginine biosynthesis</keyword>
<keyword id="KW-0067">ATP-binding</keyword>
<keyword id="KW-0963">Cytoplasm</keyword>
<keyword id="KW-0418">Kinase</keyword>
<keyword id="KW-0547">Nucleotide-binding</keyword>
<keyword id="KW-0808">Transferase</keyword>
<protein>
    <recommendedName>
        <fullName evidence="1">Acetylglutamate kinase</fullName>
        <ecNumber evidence="1">2.7.2.8</ecNumber>
    </recommendedName>
    <alternativeName>
        <fullName evidence="1">N-acetyl-L-glutamate 5-phosphotransferase</fullName>
    </alternativeName>
    <alternativeName>
        <fullName evidence="1">NAG kinase</fullName>
        <shortName evidence="1">NAGK</shortName>
    </alternativeName>
</protein>
<dbReference type="EC" id="2.7.2.8" evidence="1"/>
<dbReference type="EMBL" id="CP000653">
    <property type="protein sequence ID" value="ABP62682.1"/>
    <property type="molecule type" value="Genomic_DNA"/>
</dbReference>
<dbReference type="SMR" id="A4WG52"/>
<dbReference type="STRING" id="399742.Ent638_4027"/>
<dbReference type="KEGG" id="ent:Ent638_4027"/>
<dbReference type="eggNOG" id="COG0548">
    <property type="taxonomic scope" value="Bacteria"/>
</dbReference>
<dbReference type="HOGENOM" id="CLU_053680_1_1_6"/>
<dbReference type="UniPathway" id="UPA00068">
    <property type="reaction ID" value="UER00107"/>
</dbReference>
<dbReference type="Proteomes" id="UP000000230">
    <property type="component" value="Chromosome"/>
</dbReference>
<dbReference type="GO" id="GO:0005737">
    <property type="term" value="C:cytoplasm"/>
    <property type="evidence" value="ECO:0007669"/>
    <property type="project" value="UniProtKB-SubCell"/>
</dbReference>
<dbReference type="GO" id="GO:0003991">
    <property type="term" value="F:acetylglutamate kinase activity"/>
    <property type="evidence" value="ECO:0007669"/>
    <property type="project" value="UniProtKB-UniRule"/>
</dbReference>
<dbReference type="GO" id="GO:0005524">
    <property type="term" value="F:ATP binding"/>
    <property type="evidence" value="ECO:0007669"/>
    <property type="project" value="UniProtKB-UniRule"/>
</dbReference>
<dbReference type="GO" id="GO:0042450">
    <property type="term" value="P:arginine biosynthetic process via ornithine"/>
    <property type="evidence" value="ECO:0007669"/>
    <property type="project" value="UniProtKB-UniRule"/>
</dbReference>
<dbReference type="GO" id="GO:0006526">
    <property type="term" value="P:L-arginine biosynthetic process"/>
    <property type="evidence" value="ECO:0007669"/>
    <property type="project" value="UniProtKB-UniPathway"/>
</dbReference>
<dbReference type="CDD" id="cd04249">
    <property type="entry name" value="AAK_NAGK-NC"/>
    <property type="match status" value="1"/>
</dbReference>
<dbReference type="FunFam" id="3.40.1160.10:FF:000008">
    <property type="entry name" value="Acetylglutamate kinase"/>
    <property type="match status" value="1"/>
</dbReference>
<dbReference type="Gene3D" id="3.40.1160.10">
    <property type="entry name" value="Acetylglutamate kinase-like"/>
    <property type="match status" value="1"/>
</dbReference>
<dbReference type="HAMAP" id="MF_00082">
    <property type="entry name" value="ArgB"/>
    <property type="match status" value="1"/>
</dbReference>
<dbReference type="InterPro" id="IPR036393">
    <property type="entry name" value="AceGlu_kinase-like_sf"/>
</dbReference>
<dbReference type="InterPro" id="IPR004662">
    <property type="entry name" value="AcgluKinase_fam"/>
</dbReference>
<dbReference type="InterPro" id="IPR037528">
    <property type="entry name" value="ArgB"/>
</dbReference>
<dbReference type="InterPro" id="IPR001048">
    <property type="entry name" value="Asp/Glu/Uridylate_kinase"/>
</dbReference>
<dbReference type="InterPro" id="IPR041731">
    <property type="entry name" value="NAGK-NC"/>
</dbReference>
<dbReference type="NCBIfam" id="TIGR00761">
    <property type="entry name" value="argB"/>
    <property type="match status" value="1"/>
</dbReference>
<dbReference type="PANTHER" id="PTHR23342">
    <property type="entry name" value="N-ACETYLGLUTAMATE SYNTHASE"/>
    <property type="match status" value="1"/>
</dbReference>
<dbReference type="PANTHER" id="PTHR23342:SF0">
    <property type="entry name" value="N-ACETYLGLUTAMATE SYNTHASE, MITOCHONDRIAL"/>
    <property type="match status" value="1"/>
</dbReference>
<dbReference type="Pfam" id="PF00696">
    <property type="entry name" value="AA_kinase"/>
    <property type="match status" value="1"/>
</dbReference>
<dbReference type="PIRSF" id="PIRSF000728">
    <property type="entry name" value="NAGK"/>
    <property type="match status" value="1"/>
</dbReference>
<dbReference type="SUPFAM" id="SSF53633">
    <property type="entry name" value="Carbamate kinase-like"/>
    <property type="match status" value="1"/>
</dbReference>
<sequence>MNPLIIKLGGVLLDSEEALERLFSALVDYRESHQRPLVIVHGGGCVVDELMKGLNLPVKKKNGLRVTPADQIDIITGALAGTANKTLLSWAKKHHIASVGLYLGDGDSVKVTQLDEELGHVGLAQPGSPKLINTLLEGGFLPVVSSIGVTEEGQLMNVNADQAATALAATLGADLILLSDVSGILDGKGQRIAEMTAAKAEQLISQGIITDGMIVKVNAALDAARTLGRPVDIASWRHAEQLPALFNGTPIGTRILA</sequence>
<accession>A4WG52</accession>
<name>ARGB_ENT38</name>
<evidence type="ECO:0000255" key="1">
    <source>
        <dbReference type="HAMAP-Rule" id="MF_00082"/>
    </source>
</evidence>
<comment type="function">
    <text evidence="1">Catalyzes the ATP-dependent phosphorylation of N-acetyl-L-glutamate.</text>
</comment>
<comment type="catalytic activity">
    <reaction evidence="1">
        <text>N-acetyl-L-glutamate + ATP = N-acetyl-L-glutamyl 5-phosphate + ADP</text>
        <dbReference type="Rhea" id="RHEA:14629"/>
        <dbReference type="ChEBI" id="CHEBI:30616"/>
        <dbReference type="ChEBI" id="CHEBI:44337"/>
        <dbReference type="ChEBI" id="CHEBI:57936"/>
        <dbReference type="ChEBI" id="CHEBI:456216"/>
        <dbReference type="EC" id="2.7.2.8"/>
    </reaction>
</comment>
<comment type="pathway">
    <text evidence="1">Amino-acid biosynthesis; L-arginine biosynthesis; N(2)-acetyl-L-ornithine from L-glutamate: step 2/4.</text>
</comment>
<comment type="subunit">
    <text evidence="1">Homodimer.</text>
</comment>
<comment type="subcellular location">
    <subcellularLocation>
        <location evidence="1">Cytoplasm</location>
    </subcellularLocation>
</comment>
<comment type="similarity">
    <text evidence="1">Belongs to the acetylglutamate kinase family. ArgB subfamily.</text>
</comment>
<reference key="1">
    <citation type="journal article" date="2010" name="PLoS Genet.">
        <title>Genome sequence of the plant growth promoting endophytic bacterium Enterobacter sp. 638.</title>
        <authorList>
            <person name="Taghavi S."/>
            <person name="van der Lelie D."/>
            <person name="Hoffman A."/>
            <person name="Zhang Y.B."/>
            <person name="Walla M.D."/>
            <person name="Vangronsveld J."/>
            <person name="Newman L."/>
            <person name="Monchy S."/>
        </authorList>
    </citation>
    <scope>NUCLEOTIDE SEQUENCE [LARGE SCALE GENOMIC DNA]</scope>
    <source>
        <strain>638</strain>
    </source>
</reference>
<organism>
    <name type="scientific">Enterobacter sp. (strain 638)</name>
    <dbReference type="NCBI Taxonomy" id="399742"/>
    <lineage>
        <taxon>Bacteria</taxon>
        <taxon>Pseudomonadati</taxon>
        <taxon>Pseudomonadota</taxon>
        <taxon>Gammaproteobacteria</taxon>
        <taxon>Enterobacterales</taxon>
        <taxon>Enterobacteriaceae</taxon>
        <taxon>Enterobacter</taxon>
    </lineage>
</organism>